<name>Y500A_MYCTO</name>
<feature type="chain" id="PRO_0000427597" description="Putative DNA-binding protein MT0521">
    <location>
        <begin position="1"/>
        <end position="78"/>
    </location>
</feature>
<feature type="DNA-binding region" description="H-T-H motif" evidence="1">
    <location>
        <begin position="24"/>
        <end position="45"/>
    </location>
</feature>
<organism>
    <name type="scientific">Mycobacterium tuberculosis (strain CDC 1551 / Oshkosh)</name>
    <dbReference type="NCBI Taxonomy" id="83331"/>
    <lineage>
        <taxon>Bacteria</taxon>
        <taxon>Bacillati</taxon>
        <taxon>Actinomycetota</taxon>
        <taxon>Actinomycetes</taxon>
        <taxon>Mycobacteriales</taxon>
        <taxon>Mycobacteriaceae</taxon>
        <taxon>Mycobacterium</taxon>
        <taxon>Mycobacterium tuberculosis complex</taxon>
    </lineage>
</organism>
<evidence type="ECO:0000250" key="1"/>
<keyword id="KW-0238">DNA-binding</keyword>
<keyword id="KW-1185">Reference proteome</keyword>
<reference key="1">
    <citation type="journal article" date="2002" name="J. Bacteriol.">
        <title>Whole-genome comparison of Mycobacterium tuberculosis clinical and laboratory strains.</title>
        <authorList>
            <person name="Fleischmann R.D."/>
            <person name="Alland D."/>
            <person name="Eisen J.A."/>
            <person name="Carpenter L."/>
            <person name="White O."/>
            <person name="Peterson J.D."/>
            <person name="DeBoy R.T."/>
            <person name="Dodson R.J."/>
            <person name="Gwinn M.L."/>
            <person name="Haft D.H."/>
            <person name="Hickey E.K."/>
            <person name="Kolonay J.F."/>
            <person name="Nelson W.C."/>
            <person name="Umayam L.A."/>
            <person name="Ermolaeva M.D."/>
            <person name="Salzberg S.L."/>
            <person name="Delcher A."/>
            <person name="Utterback T.R."/>
            <person name="Weidman J.F."/>
            <person name="Khouri H.M."/>
            <person name="Gill J."/>
            <person name="Mikula A."/>
            <person name="Bishai W."/>
            <person name="Jacobs W.R. Jr."/>
            <person name="Venter J.C."/>
            <person name="Fraser C.M."/>
        </authorList>
    </citation>
    <scope>NUCLEOTIDE SEQUENCE [LARGE SCALE GENOMIC DNA]</scope>
    <source>
        <strain>CDC 1551 / Oshkosh</strain>
    </source>
</reference>
<protein>
    <recommendedName>
        <fullName>Putative DNA-binding protein MT0521</fullName>
    </recommendedName>
</protein>
<accession>P9WKT6</accession>
<accession>L0T3Y2</accession>
<accession>Q6MX35</accession>
<accession>Q8VKK5</accession>
<sequence length="78" mass="8508">MTSTNGPSARDTGFVEGQQAKTQLLTVAEVAALMRVSKMTVYRLVHNGELPAVRVGRSFRVHAKAVHDMLETSYFDAG</sequence>
<proteinExistence type="predicted"/>
<dbReference type="EMBL" id="AE000516">
    <property type="protein sequence ID" value="AAK44744.1"/>
    <property type="molecule type" value="Genomic_DNA"/>
</dbReference>
<dbReference type="RefSeq" id="WP_003402437.1">
    <property type="nucleotide sequence ID" value="NZ_KK341227.1"/>
</dbReference>
<dbReference type="SMR" id="P9WKT6"/>
<dbReference type="KEGG" id="mtc:MT0521"/>
<dbReference type="PATRIC" id="fig|83331.31.peg.551"/>
<dbReference type="HOGENOM" id="CLU_140176_4_0_11"/>
<dbReference type="Proteomes" id="UP000001020">
    <property type="component" value="Chromosome"/>
</dbReference>
<dbReference type="GO" id="GO:0003677">
    <property type="term" value="F:DNA binding"/>
    <property type="evidence" value="ECO:0007669"/>
    <property type="project" value="UniProtKB-KW"/>
</dbReference>
<dbReference type="InterPro" id="IPR009061">
    <property type="entry name" value="DNA-bd_dom_put_sf"/>
</dbReference>
<dbReference type="InterPro" id="IPR041657">
    <property type="entry name" value="HTH_17"/>
</dbReference>
<dbReference type="InterPro" id="IPR010093">
    <property type="entry name" value="SinI_DNA-bd"/>
</dbReference>
<dbReference type="NCBIfam" id="TIGR01764">
    <property type="entry name" value="excise"/>
    <property type="match status" value="1"/>
</dbReference>
<dbReference type="Pfam" id="PF12728">
    <property type="entry name" value="HTH_17"/>
    <property type="match status" value="1"/>
</dbReference>
<dbReference type="SUPFAM" id="SSF46955">
    <property type="entry name" value="Putative DNA-binding domain"/>
    <property type="match status" value="1"/>
</dbReference>
<gene>
    <name type="ordered locus">MT0521</name>
</gene>